<feature type="chain" id="PRO_0000121217" description="Ras-related protein Rab-25">
    <location>
        <begin position="1"/>
        <end position="210"/>
    </location>
</feature>
<feature type="propeptide" id="PRO_0000370823" description="Removed in mature form" evidence="6">
    <location>
        <begin position="211"/>
        <end position="213"/>
    </location>
</feature>
<feature type="short sequence motif" description="Switch 1" evidence="4">
    <location>
        <begin position="35"/>
        <end position="49"/>
    </location>
</feature>
<feature type="short sequence motif" description="Switch 2" evidence="4">
    <location>
        <begin position="67"/>
        <end position="84"/>
    </location>
</feature>
<feature type="binding site" evidence="3">
    <location>
        <position position="21"/>
    </location>
    <ligand>
        <name>GTP</name>
        <dbReference type="ChEBI" id="CHEBI:37565"/>
    </ligand>
</feature>
<feature type="binding site" evidence="3">
    <location>
        <position position="24"/>
    </location>
    <ligand>
        <name>GTP</name>
        <dbReference type="ChEBI" id="CHEBI:37565"/>
    </ligand>
</feature>
<feature type="binding site" evidence="3">
    <location>
        <position position="25"/>
    </location>
    <ligand>
        <name>GTP</name>
        <dbReference type="ChEBI" id="CHEBI:37565"/>
    </ligand>
</feature>
<feature type="binding site" evidence="3">
    <location>
        <position position="26"/>
    </location>
    <ligand>
        <name>GTP</name>
        <dbReference type="ChEBI" id="CHEBI:37565"/>
    </ligand>
</feature>
<feature type="binding site" evidence="3">
    <location>
        <position position="26"/>
    </location>
    <ligand>
        <name>Mg(2+)</name>
        <dbReference type="ChEBI" id="CHEBI:18420"/>
    </ligand>
</feature>
<feature type="binding site" evidence="3">
    <location>
        <position position="27"/>
    </location>
    <ligand>
        <name>GTP</name>
        <dbReference type="ChEBI" id="CHEBI:37565"/>
    </ligand>
</feature>
<feature type="binding site" evidence="3">
    <location>
        <position position="38"/>
    </location>
    <ligand>
        <name>GTP</name>
        <dbReference type="ChEBI" id="CHEBI:37565"/>
    </ligand>
</feature>
<feature type="binding site" evidence="3">
    <location>
        <position position="39"/>
    </location>
    <ligand>
        <name>GTP</name>
        <dbReference type="ChEBI" id="CHEBI:37565"/>
    </ligand>
</feature>
<feature type="binding site" evidence="3">
    <location>
        <position position="43"/>
    </location>
    <ligand>
        <name>GTP</name>
        <dbReference type="ChEBI" id="CHEBI:37565"/>
    </ligand>
</feature>
<feature type="binding site" evidence="3">
    <location>
        <position position="44"/>
    </location>
    <ligand>
        <name>GTP</name>
        <dbReference type="ChEBI" id="CHEBI:37565"/>
    </ligand>
</feature>
<feature type="binding site" evidence="3">
    <location>
        <position position="44"/>
    </location>
    <ligand>
        <name>Mg(2+)</name>
        <dbReference type="ChEBI" id="CHEBI:18420"/>
    </ligand>
</feature>
<feature type="binding site" evidence="3">
    <location>
        <position position="67"/>
    </location>
    <ligand>
        <name>Mg(2+)</name>
        <dbReference type="ChEBI" id="CHEBI:18420"/>
    </ligand>
</feature>
<feature type="binding site" evidence="3">
    <location>
        <position position="70"/>
    </location>
    <ligand>
        <name>GTP</name>
        <dbReference type="ChEBI" id="CHEBI:37565"/>
    </ligand>
</feature>
<feature type="binding site" evidence="3">
    <location>
        <position position="125"/>
    </location>
    <ligand>
        <name>GTP</name>
        <dbReference type="ChEBI" id="CHEBI:37565"/>
    </ligand>
</feature>
<feature type="binding site" evidence="3">
    <location>
        <position position="126"/>
    </location>
    <ligand>
        <name>GTP</name>
        <dbReference type="ChEBI" id="CHEBI:37565"/>
    </ligand>
</feature>
<feature type="binding site" evidence="3">
    <location>
        <position position="128"/>
    </location>
    <ligand>
        <name>GTP</name>
        <dbReference type="ChEBI" id="CHEBI:37565"/>
    </ligand>
</feature>
<feature type="binding site" evidence="3">
    <location>
        <position position="156"/>
    </location>
    <ligand>
        <name>GTP</name>
        <dbReference type="ChEBI" id="CHEBI:37565"/>
    </ligand>
</feature>
<feature type="binding site" evidence="3">
    <location>
        <position position="157"/>
    </location>
    <ligand>
        <name>GTP</name>
        <dbReference type="ChEBI" id="CHEBI:37565"/>
    </ligand>
</feature>
<feature type="modified residue" description="Cysteine methyl ester" evidence="6">
    <location>
        <position position="210"/>
    </location>
</feature>
<feature type="lipid moiety-binding region" description="S-geranylgeranyl cysteine" evidence="1">
    <location>
        <position position="209"/>
    </location>
</feature>
<feature type="lipid moiety-binding region" description="S-geranylgeranyl cysteine" evidence="1">
    <location>
        <position position="210"/>
    </location>
</feature>
<name>RAB25_RABIT</name>
<proteinExistence type="evidence at protein level"/>
<comment type="function">
    <text evidence="2 3 5 8">The small GTPases Rab are key regulators of intracellular membrane trafficking, from the formation of transport vesicles to their fusion with membranes. Rabs cycle between an inactive GDP-bound form and an active GTP-bound form that is able to recruit to membranes different set of downstream effectors directly responsible for vesicle formation, movement, tethering and fusion (PubMed:9880326). RAB25 regulates epithelial cell differentiation, proliferation and survival, thereby playing key roles in tumorigenesis. Promotes invasive migration of cells in which it functions to localize and maintain integrin alpha-V/beta-1 at the tips of extending pseudopodia (By similarity). Involved in the regulation of epithelial morphogenesis through the control of CLDN4 expression and localization at tight junctions (By similarity). May selectively regulate the apical recycling pathway (PubMed:9880326). Together with MYO5B regulates transcytosis (By similarity).</text>
</comment>
<comment type="catalytic activity">
    <reaction evidence="8">
        <text>GTP + H2O = GDP + phosphate + H(+)</text>
        <dbReference type="Rhea" id="RHEA:19669"/>
        <dbReference type="ChEBI" id="CHEBI:15377"/>
        <dbReference type="ChEBI" id="CHEBI:15378"/>
        <dbReference type="ChEBI" id="CHEBI:37565"/>
        <dbReference type="ChEBI" id="CHEBI:43474"/>
        <dbReference type="ChEBI" id="CHEBI:58189"/>
        <dbReference type="EC" id="3.6.5.2"/>
    </reaction>
    <physiologicalReaction direction="left-to-right" evidence="10">
        <dbReference type="Rhea" id="RHEA:19670"/>
    </physiologicalReaction>
</comment>
<comment type="cofactor">
    <cofactor evidence="3">
        <name>Mg(2+)</name>
        <dbReference type="ChEBI" id="CHEBI:18420"/>
    </cofactor>
</comment>
<comment type="activity regulation">
    <text evidence="3">Regulated by guanine nucleotide exchange factors (GEFs) which promote the exchange of bound GDP for free GTP. Regulated by GTPase activating proteins (GAPs) which increase the GTP hydrolysis activity. Inhibited by GDP dissociation inhibitors (GDIs) which prevent Rab-GDP dissociation.</text>
</comment>
<comment type="subunit">
    <text evidence="3">Interacts (GTP-bound form) with RAB11FIP1, RAB11FIP2, RAB11FIP3 and RAB11FIP4. Interacts (via the hypervariable C-terminal region) with ITGB1 (via the cytoplasmic region); the interaction is GTP-dependent. Interacts with ITGAV. Associates with the integrin alpha-V/beta-1 heterodimer. Interacts with VPS33B.</text>
</comment>
<comment type="subcellular location">
    <subcellularLocation>
        <location evidence="9">Cell membrane</location>
        <topology evidence="9">Lipid-anchor</topology>
        <orientation evidence="9">Cytoplasmic side</orientation>
    </subcellularLocation>
    <subcellularLocation>
        <location evidence="3">Cell projection</location>
        <location evidence="3">Pseudopodium membrane</location>
    </subcellularLocation>
    <subcellularLocation>
        <location evidence="8">Cytoplasmic vesicle</location>
    </subcellularLocation>
    <text evidence="3 8">Colocalizes with integrin alpha-V/beta-1 in vesicles at the pseudopodial tips. Colocalizes with RAB11A in subapical vesicles (PubMed:9880326).</text>
</comment>
<comment type="tissue specificity">
    <text evidence="7">Expression is restricted to epithelial cells (PubMed:8360141). Expressed in the gastrointestinal mucosa, (highest expression seen in the ileum and colon), kidney, and lung. A very minor and variable level of expression is seen in the splenic tissue (PubMed:8360141).</text>
</comment>
<comment type="domain">
    <text evidence="4">Switch 1, switch 2 and the interswitch regions are characteristic of Rab GTPases and mediate the interactions with Rab downstream effectors. The switch regions undergo conformational changes upon nucleotide binding which drive interaction with specific sets of effector proteins, with most effectors only binding to GTP-bound Rab.</text>
</comment>
<comment type="similarity">
    <text evidence="9">Belongs to the small GTPase superfamily. Rab family.</text>
</comment>
<protein>
    <recommendedName>
        <fullName>Ras-related protein Rab-25</fullName>
        <ecNumber evidence="8">3.6.5.2</ecNumber>
    </recommendedName>
</protein>
<accession>P46629</accession>
<dbReference type="EC" id="3.6.5.2" evidence="8"/>
<dbReference type="EMBL" id="L03303">
    <property type="protein sequence ID" value="AAA31261.1"/>
    <property type="molecule type" value="mRNA"/>
</dbReference>
<dbReference type="PIR" id="A48500">
    <property type="entry name" value="A48500"/>
</dbReference>
<dbReference type="SMR" id="P46629"/>
<dbReference type="FunCoup" id="P46629">
    <property type="interactions" value="51"/>
</dbReference>
<dbReference type="STRING" id="9986.ENSOCUP00000048139"/>
<dbReference type="PaxDb" id="9986-ENSOCUP00000004890"/>
<dbReference type="eggNOG" id="KOG0087">
    <property type="taxonomic scope" value="Eukaryota"/>
</dbReference>
<dbReference type="InParanoid" id="P46629"/>
<dbReference type="Proteomes" id="UP000001811">
    <property type="component" value="Unplaced"/>
</dbReference>
<dbReference type="GO" id="GO:0031410">
    <property type="term" value="C:cytoplasmic vesicle"/>
    <property type="evidence" value="ECO:0000250"/>
    <property type="project" value="UniProtKB"/>
</dbReference>
<dbReference type="GO" id="GO:0031143">
    <property type="term" value="C:pseudopodium"/>
    <property type="evidence" value="ECO:0000250"/>
    <property type="project" value="UniProtKB"/>
</dbReference>
<dbReference type="GO" id="GO:0031260">
    <property type="term" value="C:pseudopodium membrane"/>
    <property type="evidence" value="ECO:0007669"/>
    <property type="project" value="UniProtKB-SubCell"/>
</dbReference>
<dbReference type="GO" id="GO:0003925">
    <property type="term" value="F:G protein activity"/>
    <property type="evidence" value="ECO:0000314"/>
    <property type="project" value="UniProtKB"/>
</dbReference>
<dbReference type="GO" id="GO:0005525">
    <property type="term" value="F:GTP binding"/>
    <property type="evidence" value="ECO:0007669"/>
    <property type="project" value="UniProtKB-KW"/>
</dbReference>
<dbReference type="GO" id="GO:0003382">
    <property type="term" value="P:epithelial cell morphogenesis"/>
    <property type="evidence" value="ECO:0000250"/>
    <property type="project" value="UniProtKB"/>
</dbReference>
<dbReference type="GO" id="GO:0008284">
    <property type="term" value="P:positive regulation of cell population proliferation"/>
    <property type="evidence" value="ECO:0000250"/>
    <property type="project" value="UniProtKB"/>
</dbReference>
<dbReference type="GO" id="GO:0015031">
    <property type="term" value="P:protein transport"/>
    <property type="evidence" value="ECO:0007669"/>
    <property type="project" value="UniProtKB-KW"/>
</dbReference>
<dbReference type="GO" id="GO:0031268">
    <property type="term" value="P:pseudopodium organization"/>
    <property type="evidence" value="ECO:0000250"/>
    <property type="project" value="UniProtKB"/>
</dbReference>
<dbReference type="CDD" id="cd01868">
    <property type="entry name" value="Rab11_like"/>
    <property type="match status" value="1"/>
</dbReference>
<dbReference type="FunFam" id="3.40.50.300:FF:000067">
    <property type="entry name" value="ras-related protein RABA1f"/>
    <property type="match status" value="1"/>
</dbReference>
<dbReference type="Gene3D" id="3.40.50.300">
    <property type="entry name" value="P-loop containing nucleotide triphosphate hydrolases"/>
    <property type="match status" value="1"/>
</dbReference>
<dbReference type="InterPro" id="IPR027417">
    <property type="entry name" value="P-loop_NTPase"/>
</dbReference>
<dbReference type="InterPro" id="IPR050209">
    <property type="entry name" value="Rab_GTPases_membrane_traffic"/>
</dbReference>
<dbReference type="InterPro" id="IPR005225">
    <property type="entry name" value="Small_GTP-bd"/>
</dbReference>
<dbReference type="InterPro" id="IPR001806">
    <property type="entry name" value="Small_GTPase"/>
</dbReference>
<dbReference type="NCBIfam" id="TIGR00231">
    <property type="entry name" value="small_GTP"/>
    <property type="match status" value="1"/>
</dbReference>
<dbReference type="PANTHER" id="PTHR47979">
    <property type="entry name" value="DRAB11-RELATED"/>
    <property type="match status" value="1"/>
</dbReference>
<dbReference type="Pfam" id="PF00071">
    <property type="entry name" value="Ras"/>
    <property type="match status" value="1"/>
</dbReference>
<dbReference type="PRINTS" id="PR00449">
    <property type="entry name" value="RASTRNSFRMNG"/>
</dbReference>
<dbReference type="SMART" id="SM00175">
    <property type="entry name" value="RAB"/>
    <property type="match status" value="1"/>
</dbReference>
<dbReference type="SMART" id="SM00176">
    <property type="entry name" value="RAN"/>
    <property type="match status" value="1"/>
</dbReference>
<dbReference type="SMART" id="SM00173">
    <property type="entry name" value="RAS"/>
    <property type="match status" value="1"/>
</dbReference>
<dbReference type="SMART" id="SM00174">
    <property type="entry name" value="RHO"/>
    <property type="match status" value="1"/>
</dbReference>
<dbReference type="SUPFAM" id="SSF52540">
    <property type="entry name" value="P-loop containing nucleoside triphosphate hydrolases"/>
    <property type="match status" value="1"/>
</dbReference>
<dbReference type="PROSITE" id="PS51419">
    <property type="entry name" value="RAB"/>
    <property type="match status" value="1"/>
</dbReference>
<organism>
    <name type="scientific">Oryctolagus cuniculus</name>
    <name type="common">Rabbit</name>
    <dbReference type="NCBI Taxonomy" id="9986"/>
    <lineage>
        <taxon>Eukaryota</taxon>
        <taxon>Metazoa</taxon>
        <taxon>Chordata</taxon>
        <taxon>Craniata</taxon>
        <taxon>Vertebrata</taxon>
        <taxon>Euteleostomi</taxon>
        <taxon>Mammalia</taxon>
        <taxon>Eutheria</taxon>
        <taxon>Euarchontoglires</taxon>
        <taxon>Glires</taxon>
        <taxon>Lagomorpha</taxon>
        <taxon>Leporidae</taxon>
        <taxon>Oryctolagus</taxon>
    </lineage>
</organism>
<gene>
    <name type="primary">RAB25</name>
</gene>
<evidence type="ECO:0000250" key="1"/>
<evidence type="ECO:0000250" key="2">
    <source>
        <dbReference type="UniProtKB" id="E2RQ15"/>
    </source>
</evidence>
<evidence type="ECO:0000250" key="3">
    <source>
        <dbReference type="UniProtKB" id="P57735"/>
    </source>
</evidence>
<evidence type="ECO:0000250" key="4">
    <source>
        <dbReference type="UniProtKB" id="P62820"/>
    </source>
</evidence>
<evidence type="ECO:0000250" key="5">
    <source>
        <dbReference type="UniProtKB" id="Q9WTL2"/>
    </source>
</evidence>
<evidence type="ECO:0000255" key="6"/>
<evidence type="ECO:0000269" key="7">
    <source>
    </source>
</evidence>
<evidence type="ECO:0000269" key="8">
    <source>
    </source>
</evidence>
<evidence type="ECO:0000305" key="9"/>
<evidence type="ECO:0000305" key="10">
    <source>
    </source>
</evidence>
<keyword id="KW-1003">Cell membrane</keyword>
<keyword id="KW-0966">Cell projection</keyword>
<keyword id="KW-0968">Cytoplasmic vesicle</keyword>
<keyword id="KW-0342">GTP-binding</keyword>
<keyword id="KW-0378">Hydrolase</keyword>
<keyword id="KW-0449">Lipoprotein</keyword>
<keyword id="KW-0460">Magnesium</keyword>
<keyword id="KW-0472">Membrane</keyword>
<keyword id="KW-0479">Metal-binding</keyword>
<keyword id="KW-0488">Methylation</keyword>
<keyword id="KW-0547">Nucleotide-binding</keyword>
<keyword id="KW-0636">Prenylation</keyword>
<keyword id="KW-0653">Protein transport</keyword>
<keyword id="KW-1185">Reference proteome</keyword>
<keyword id="KW-0813">Transport</keyword>
<reference key="1">
    <citation type="journal article" date="1993" name="J. Biol. Chem.">
        <title>Identification of a small GTP-binding protein, Rab25, expressed in the gastrointestinal mucosa, kidney, and lung.</title>
        <authorList>
            <person name="Goldenring J.R."/>
            <person name="Shen R.K."/>
            <person name="Vaughan H.D."/>
            <person name="Modlin I.M."/>
        </authorList>
    </citation>
    <scope>NUCLEOTIDE SEQUENCE [MRNA]</scope>
    <scope>TISSUE SPECIFICITY</scope>
    <source>
        <strain>New Zealand white</strain>
        <tissue>Gastric fundic mucosa</tissue>
    </source>
</reference>
<reference key="2">
    <citation type="journal article" date="1999" name="Mol. Biol. Cell">
        <title>Association of Rab25 and Rab11a with the apical recycling system of polarized Madin-Darby canine kidney cells.</title>
        <authorList>
            <person name="Casanova J.E."/>
            <person name="Wang X."/>
            <person name="Kumar R."/>
            <person name="Bhartur S.G."/>
            <person name="Navarre J."/>
            <person name="Woodrum J.E."/>
            <person name="Altschuler Y."/>
            <person name="Ray G.S."/>
            <person name="Goldenring J.R."/>
        </authorList>
    </citation>
    <scope>FUNCTION</scope>
    <scope>CATALYTIC ACTIVITY</scope>
    <scope>SUBCELLULAR LOCATION</scope>
</reference>
<sequence length="213" mass="23428">MGNGKEEDYNFVFKVVLIGESGVGKTNLLSRFTRNEFSHDSRTTIGVEFSTRTVLLGTAAVKAQIWDTAGLERYRAITSAYYRGAVGALLVFDLTKHQTYAVVERWLKELYDHAEATIVVMLVGNKSDLSQAREVPTEEARMFAENNGLLFLETSALDSTNVELAFETVLKEIFAKVSKQIQNSPRSNAIALGSAQAGQEPGPGQKRACCINL</sequence>